<evidence type="ECO:0000255" key="1">
    <source>
        <dbReference type="PROSITE-ProRule" id="PRU00238"/>
    </source>
</evidence>
<gene>
    <name type="primary">hbb</name>
</gene>
<name>HBB_TREHA</name>
<organism>
    <name type="scientific">Trematomus hansoni</name>
    <name type="common">Striped rockcod</name>
    <name type="synonym">Notothenia hansoni</name>
    <dbReference type="NCBI Taxonomy" id="36196"/>
    <lineage>
        <taxon>Eukaryota</taxon>
        <taxon>Metazoa</taxon>
        <taxon>Chordata</taxon>
        <taxon>Craniata</taxon>
        <taxon>Vertebrata</taxon>
        <taxon>Euteleostomi</taxon>
        <taxon>Actinopterygii</taxon>
        <taxon>Neopterygii</taxon>
        <taxon>Teleostei</taxon>
        <taxon>Neoteleostei</taxon>
        <taxon>Acanthomorphata</taxon>
        <taxon>Eupercaria</taxon>
        <taxon>Perciformes</taxon>
        <taxon>Notothenioidei</taxon>
        <taxon>Nototheniidae</taxon>
        <taxon>Trematomus</taxon>
    </lineage>
</organism>
<feature type="initiator methionine" description="Removed">
    <location>
        <position position="1"/>
    </location>
</feature>
<feature type="chain" id="PRO_0000053134" description="Hemoglobin subunit beta">
    <location>
        <begin position="2"/>
        <end position="147"/>
    </location>
</feature>
<feature type="domain" description="Globin" evidence="1">
    <location>
        <begin position="3"/>
        <end position="147"/>
    </location>
</feature>
<feature type="binding site" description="distal binding residue">
    <location>
        <position position="64"/>
    </location>
    <ligand>
        <name>heme b</name>
        <dbReference type="ChEBI" id="CHEBI:60344"/>
    </ligand>
    <ligandPart>
        <name>Fe</name>
        <dbReference type="ChEBI" id="CHEBI:18248"/>
    </ligandPart>
</feature>
<feature type="binding site" description="proximal binding residue">
    <location>
        <position position="93"/>
    </location>
    <ligand>
        <name>heme b</name>
        <dbReference type="ChEBI" id="CHEBI:60344"/>
    </ligand>
    <ligandPart>
        <name>Fe</name>
        <dbReference type="ChEBI" id="CHEBI:18248"/>
    </ligandPart>
</feature>
<reference key="1">
    <citation type="journal article" date="1998" name="Proc. Natl. Acad. Sci. U.S.A.">
        <title>Antarctic fish hemoglobins: evidence for adaptive evolution at subzero temperature.</title>
        <authorList>
            <person name="Bargelloni L."/>
            <person name="Marcato S."/>
            <person name="Patarnello T."/>
        </authorList>
    </citation>
    <scope>NUCLEOTIDE SEQUENCE [MRNA]</scope>
</reference>
<dbReference type="EMBL" id="AF067571">
    <property type="protein sequence ID" value="AAC41389.1"/>
    <property type="molecule type" value="mRNA"/>
</dbReference>
<dbReference type="SMR" id="O93351"/>
<dbReference type="GO" id="GO:0072562">
    <property type="term" value="C:blood microparticle"/>
    <property type="evidence" value="ECO:0007669"/>
    <property type="project" value="TreeGrafter"/>
</dbReference>
<dbReference type="GO" id="GO:0031838">
    <property type="term" value="C:haptoglobin-hemoglobin complex"/>
    <property type="evidence" value="ECO:0007669"/>
    <property type="project" value="TreeGrafter"/>
</dbReference>
<dbReference type="GO" id="GO:0005833">
    <property type="term" value="C:hemoglobin complex"/>
    <property type="evidence" value="ECO:0007669"/>
    <property type="project" value="InterPro"/>
</dbReference>
<dbReference type="GO" id="GO:0031720">
    <property type="term" value="F:haptoglobin binding"/>
    <property type="evidence" value="ECO:0007669"/>
    <property type="project" value="TreeGrafter"/>
</dbReference>
<dbReference type="GO" id="GO:0020037">
    <property type="term" value="F:heme binding"/>
    <property type="evidence" value="ECO:0007669"/>
    <property type="project" value="InterPro"/>
</dbReference>
<dbReference type="GO" id="GO:0046872">
    <property type="term" value="F:metal ion binding"/>
    <property type="evidence" value="ECO:0007669"/>
    <property type="project" value="UniProtKB-KW"/>
</dbReference>
<dbReference type="GO" id="GO:0043177">
    <property type="term" value="F:organic acid binding"/>
    <property type="evidence" value="ECO:0007669"/>
    <property type="project" value="TreeGrafter"/>
</dbReference>
<dbReference type="GO" id="GO:0019825">
    <property type="term" value="F:oxygen binding"/>
    <property type="evidence" value="ECO:0007669"/>
    <property type="project" value="InterPro"/>
</dbReference>
<dbReference type="GO" id="GO:0005344">
    <property type="term" value="F:oxygen carrier activity"/>
    <property type="evidence" value="ECO:0007669"/>
    <property type="project" value="UniProtKB-KW"/>
</dbReference>
<dbReference type="GO" id="GO:0004601">
    <property type="term" value="F:peroxidase activity"/>
    <property type="evidence" value="ECO:0007669"/>
    <property type="project" value="TreeGrafter"/>
</dbReference>
<dbReference type="GO" id="GO:0042744">
    <property type="term" value="P:hydrogen peroxide catabolic process"/>
    <property type="evidence" value="ECO:0007669"/>
    <property type="project" value="TreeGrafter"/>
</dbReference>
<dbReference type="CDD" id="cd08925">
    <property type="entry name" value="Hb-beta-like"/>
    <property type="match status" value="1"/>
</dbReference>
<dbReference type="FunFam" id="1.10.490.10:FF:000001">
    <property type="entry name" value="Hemoglobin subunit beta"/>
    <property type="match status" value="1"/>
</dbReference>
<dbReference type="Gene3D" id="1.10.490.10">
    <property type="entry name" value="Globins"/>
    <property type="match status" value="1"/>
</dbReference>
<dbReference type="InterPro" id="IPR000971">
    <property type="entry name" value="Globin"/>
</dbReference>
<dbReference type="InterPro" id="IPR009050">
    <property type="entry name" value="Globin-like_sf"/>
</dbReference>
<dbReference type="InterPro" id="IPR012292">
    <property type="entry name" value="Globin/Proto"/>
</dbReference>
<dbReference type="InterPro" id="IPR002337">
    <property type="entry name" value="Hemoglobin_b"/>
</dbReference>
<dbReference type="InterPro" id="IPR050056">
    <property type="entry name" value="Hemoglobin_oxygen_transport"/>
</dbReference>
<dbReference type="PANTHER" id="PTHR11442">
    <property type="entry name" value="HEMOGLOBIN FAMILY MEMBER"/>
    <property type="match status" value="1"/>
</dbReference>
<dbReference type="PANTHER" id="PTHR11442:SF7">
    <property type="entry name" value="HEMOGLOBIN SUBUNIT EPSILON"/>
    <property type="match status" value="1"/>
</dbReference>
<dbReference type="Pfam" id="PF00042">
    <property type="entry name" value="Globin"/>
    <property type="match status" value="1"/>
</dbReference>
<dbReference type="PRINTS" id="PR00814">
    <property type="entry name" value="BETAHAEM"/>
</dbReference>
<dbReference type="SUPFAM" id="SSF46458">
    <property type="entry name" value="Globin-like"/>
    <property type="match status" value="1"/>
</dbReference>
<dbReference type="PROSITE" id="PS01033">
    <property type="entry name" value="GLOBIN"/>
    <property type="match status" value="1"/>
</dbReference>
<accession>O93351</accession>
<keyword id="KW-0349">Heme</keyword>
<keyword id="KW-0408">Iron</keyword>
<keyword id="KW-0479">Metal-binding</keyword>
<keyword id="KW-0561">Oxygen transport</keyword>
<keyword id="KW-0813">Transport</keyword>
<proteinExistence type="evidence at transcript level"/>
<sequence length="147" mass="16310">MVEWTDKERSIISDIFSHMDYDDIGPKALSRCLVVYPWTQRYFSGFGNLYNAEGIMSNANVAAHGIKVLHGLDRGVKNMDNIAATYADLSTLHSEKLHVDPDNFKLLSDCITIVLAAKMGHAFTAETQGAFQKFLAVVVSALGKQYH</sequence>
<protein>
    <recommendedName>
        <fullName>Hemoglobin subunit beta</fullName>
    </recommendedName>
    <alternativeName>
        <fullName>Beta-globin</fullName>
    </alternativeName>
    <alternativeName>
        <fullName>Hemoglobin beta chain</fullName>
    </alternativeName>
</protein>
<comment type="function">
    <text>Involved in oxygen transport from gills to the various peripheral tissues.</text>
</comment>
<comment type="subunit">
    <text>Heterotetramer of two alpha chains and two beta chains.</text>
</comment>
<comment type="tissue specificity">
    <text>Red blood cells.</text>
</comment>
<comment type="similarity">
    <text evidence="1">Belongs to the globin family.</text>
</comment>